<name>COX3_PELCP</name>
<sequence length="261" mass="29900">MTHQTHAYHMVNPSPWPLTGALSALLMTSGLIMWFHFNSTTLLMLGLTTNMLTMYQWWRDIIRESTFQGHHTPSVQKGLRYGMILFIISEVLFFTGFFWAFYHSSLAPTPELGGCWPPTGIHPLNPLEVPLLNTSVLLASGVSITWAHHSLMEGNRNHMLQALFITIALGVYFTLLQASEYYEAPFTISDGVYGSTFFVATGFHGLHVIIGSTFLIVCFFRQLKFHFTSNHHFGFEAAAWYWHFVDVVWLFLYVSIYWWGS</sequence>
<geneLocation type="mitochondrion"/>
<accession>O47692</accession>
<dbReference type="EC" id="7.1.1.9"/>
<dbReference type="EMBL" id="AF030457">
    <property type="protein sequence ID" value="AAB93596.1"/>
    <property type="molecule type" value="Genomic_DNA"/>
</dbReference>
<dbReference type="SMR" id="O47692"/>
<dbReference type="GO" id="GO:0005743">
    <property type="term" value="C:mitochondrial inner membrane"/>
    <property type="evidence" value="ECO:0007669"/>
    <property type="project" value="UniProtKB-SubCell"/>
</dbReference>
<dbReference type="GO" id="GO:0045277">
    <property type="term" value="C:respiratory chain complex IV"/>
    <property type="evidence" value="ECO:0000250"/>
    <property type="project" value="UniProtKB"/>
</dbReference>
<dbReference type="GO" id="GO:0004129">
    <property type="term" value="F:cytochrome-c oxidase activity"/>
    <property type="evidence" value="ECO:0007669"/>
    <property type="project" value="UniProtKB-EC"/>
</dbReference>
<dbReference type="GO" id="GO:0006123">
    <property type="term" value="P:mitochondrial electron transport, cytochrome c to oxygen"/>
    <property type="evidence" value="ECO:0007669"/>
    <property type="project" value="TreeGrafter"/>
</dbReference>
<dbReference type="GO" id="GO:0008535">
    <property type="term" value="P:respiratory chain complex IV assembly"/>
    <property type="evidence" value="ECO:0000250"/>
    <property type="project" value="UniProtKB"/>
</dbReference>
<dbReference type="CDD" id="cd01665">
    <property type="entry name" value="Cyt_c_Oxidase_III"/>
    <property type="match status" value="1"/>
</dbReference>
<dbReference type="FunFam" id="1.10.287.70:FF:000048">
    <property type="entry name" value="Cytochrome c oxidase subunit 3"/>
    <property type="match status" value="1"/>
</dbReference>
<dbReference type="FunFam" id="1.20.120.80:FF:000002">
    <property type="entry name" value="Cytochrome c oxidase subunit 3"/>
    <property type="match status" value="1"/>
</dbReference>
<dbReference type="Gene3D" id="1.10.287.70">
    <property type="match status" value="1"/>
</dbReference>
<dbReference type="Gene3D" id="1.20.120.80">
    <property type="entry name" value="Cytochrome c oxidase, subunit III, four-helix bundle"/>
    <property type="match status" value="1"/>
</dbReference>
<dbReference type="InterPro" id="IPR024791">
    <property type="entry name" value="Cyt_c/ubiquinol_Oxase_su3"/>
</dbReference>
<dbReference type="InterPro" id="IPR033945">
    <property type="entry name" value="Cyt_c_oxase_su3_dom"/>
</dbReference>
<dbReference type="InterPro" id="IPR000298">
    <property type="entry name" value="Cyt_c_oxidase-like_su3"/>
</dbReference>
<dbReference type="InterPro" id="IPR035973">
    <property type="entry name" value="Cyt_c_oxidase_su3-like_sf"/>
</dbReference>
<dbReference type="InterPro" id="IPR013833">
    <property type="entry name" value="Cyt_c_oxidase_su3_a-hlx"/>
</dbReference>
<dbReference type="PANTHER" id="PTHR11403:SF7">
    <property type="entry name" value="CYTOCHROME C OXIDASE SUBUNIT 3"/>
    <property type="match status" value="1"/>
</dbReference>
<dbReference type="PANTHER" id="PTHR11403">
    <property type="entry name" value="CYTOCHROME C OXIDASE SUBUNIT III"/>
    <property type="match status" value="1"/>
</dbReference>
<dbReference type="Pfam" id="PF00510">
    <property type="entry name" value="COX3"/>
    <property type="match status" value="1"/>
</dbReference>
<dbReference type="SUPFAM" id="SSF81452">
    <property type="entry name" value="Cytochrome c oxidase subunit III-like"/>
    <property type="match status" value="1"/>
</dbReference>
<dbReference type="PROSITE" id="PS50253">
    <property type="entry name" value="COX3"/>
    <property type="match status" value="1"/>
</dbReference>
<reference key="1">
    <citation type="journal article" date="1999" name="Mol. Phylogenet. Evol.">
        <title>Phylogenetic relationships in the bovid subfamily Antilopinae based on mitochondrial DNA sequences.</title>
        <authorList>
            <person name="Rebholz W.E.R."/>
            <person name="Harley E.H."/>
        </authorList>
    </citation>
    <scope>NUCLEOTIDE SEQUENCE [GENOMIC DNA]</scope>
</reference>
<proteinExistence type="inferred from homology"/>
<gene>
    <name type="primary">MT-CO3</name>
    <name type="synonym">COIII</name>
    <name type="synonym">COXIII</name>
    <name type="synonym">MTCO3</name>
</gene>
<evidence type="ECO:0000250" key="1">
    <source>
        <dbReference type="UniProtKB" id="P00415"/>
    </source>
</evidence>
<evidence type="ECO:0000250" key="2">
    <source>
        <dbReference type="UniProtKB" id="P00420"/>
    </source>
</evidence>
<evidence type="ECO:0000305" key="3"/>
<feature type="chain" id="PRO_0000183827" description="Cytochrome c oxidase subunit 3">
    <location>
        <begin position="1"/>
        <end position="261"/>
    </location>
</feature>
<feature type="topological domain" description="Mitochondrial matrix" evidence="1">
    <location>
        <begin position="1"/>
        <end position="15"/>
    </location>
</feature>
<feature type="transmembrane region" description="Helical; Name=I" evidence="1">
    <location>
        <begin position="16"/>
        <end position="34"/>
    </location>
</feature>
<feature type="topological domain" description="Mitochondrial intermembrane" evidence="1">
    <location>
        <begin position="35"/>
        <end position="40"/>
    </location>
</feature>
<feature type="transmembrane region" description="Helical; Name=II" evidence="1">
    <location>
        <begin position="41"/>
        <end position="66"/>
    </location>
</feature>
<feature type="topological domain" description="Mitochondrial matrix" evidence="1">
    <location>
        <begin position="67"/>
        <end position="72"/>
    </location>
</feature>
<feature type="transmembrane region" description="Helical; Name=III" evidence="1">
    <location>
        <begin position="73"/>
        <end position="105"/>
    </location>
</feature>
<feature type="topological domain" description="Mitochondrial intermembrane" evidence="1">
    <location>
        <begin position="106"/>
        <end position="128"/>
    </location>
</feature>
<feature type="transmembrane region" description="Helical; Name=IV" evidence="1">
    <location>
        <begin position="129"/>
        <end position="152"/>
    </location>
</feature>
<feature type="topological domain" description="Mitochondrial matrix" evidence="1">
    <location>
        <begin position="153"/>
        <end position="155"/>
    </location>
</feature>
<feature type="transmembrane region" description="Helical; Name=V" evidence="1">
    <location>
        <begin position="156"/>
        <end position="183"/>
    </location>
</feature>
<feature type="topological domain" description="Mitochondrial intermembrane" evidence="1">
    <location>
        <begin position="184"/>
        <end position="190"/>
    </location>
</feature>
<feature type="transmembrane region" description="Helical; Name=VI" evidence="1">
    <location>
        <begin position="191"/>
        <end position="223"/>
    </location>
</feature>
<feature type="topological domain" description="Mitochondrial matrix" evidence="1">
    <location>
        <begin position="224"/>
        <end position="232"/>
    </location>
</feature>
<feature type="transmembrane region" description="Helical; Name=VII" evidence="1">
    <location>
        <begin position="233"/>
        <end position="256"/>
    </location>
</feature>
<feature type="topological domain" description="Mitochondrial intermembrane" evidence="1">
    <location>
        <begin position="257"/>
        <end position="261"/>
    </location>
</feature>
<organism>
    <name type="scientific">Pelea capreolus</name>
    <name type="common">Gray rhebok</name>
    <dbReference type="NCBI Taxonomy" id="59552"/>
    <lineage>
        <taxon>Eukaryota</taxon>
        <taxon>Metazoa</taxon>
        <taxon>Chordata</taxon>
        <taxon>Craniata</taxon>
        <taxon>Vertebrata</taxon>
        <taxon>Euteleostomi</taxon>
        <taxon>Mammalia</taxon>
        <taxon>Eutheria</taxon>
        <taxon>Laurasiatheria</taxon>
        <taxon>Artiodactyla</taxon>
        <taxon>Ruminantia</taxon>
        <taxon>Pecora</taxon>
        <taxon>Bovidae</taxon>
        <taxon>Peleinae</taxon>
        <taxon>Pelea</taxon>
    </lineage>
</organism>
<comment type="function">
    <text evidence="2">Component of the cytochrome c oxidase, the last enzyme in the mitochondrial electron transport chain which drives oxidative phosphorylation. The respiratory chain contains 3 multisubunit complexes succinate dehydrogenase (complex II, CII), ubiquinol-cytochrome c oxidoreductase (cytochrome b-c1 complex, complex III, CIII) and cytochrome c oxidase (complex IV, CIV), that cooperate to transfer electrons derived from NADH and succinate to molecular oxygen, creating an electrochemical gradient over the inner membrane that drives transmembrane transport and the ATP synthase. Cytochrome c oxidase is the component of the respiratory chain that catalyzes the reduction of oxygen to water. Electrons originating from reduced cytochrome c in the intermembrane space (IMS) are transferred via the dinuclear copper A center (CU(A)) of subunit 2 and heme A of subunit 1 to the active site in subunit 1, a binuclear center (BNC) formed by heme A3 and copper B (CU(B)). The BNC reduces molecular oxygen to 2 water molecules using 4 electrons from cytochrome c in the IMS and 4 protons from the mitochondrial matrix.</text>
</comment>
<comment type="catalytic activity">
    <reaction evidence="2">
        <text>4 Fe(II)-[cytochrome c] + O2 + 8 H(+)(in) = 4 Fe(III)-[cytochrome c] + 2 H2O + 4 H(+)(out)</text>
        <dbReference type="Rhea" id="RHEA:11436"/>
        <dbReference type="Rhea" id="RHEA-COMP:10350"/>
        <dbReference type="Rhea" id="RHEA-COMP:14399"/>
        <dbReference type="ChEBI" id="CHEBI:15377"/>
        <dbReference type="ChEBI" id="CHEBI:15378"/>
        <dbReference type="ChEBI" id="CHEBI:15379"/>
        <dbReference type="ChEBI" id="CHEBI:29033"/>
        <dbReference type="ChEBI" id="CHEBI:29034"/>
        <dbReference type="EC" id="7.1.1.9"/>
    </reaction>
    <physiologicalReaction direction="left-to-right" evidence="2">
        <dbReference type="Rhea" id="RHEA:11437"/>
    </physiologicalReaction>
</comment>
<comment type="subunit">
    <text evidence="1">Component of the cytochrome c oxidase (complex IV, CIV), a multisubunit enzyme composed of 14 subunits. The complex is composed of a catalytic core of 3 subunits MT-CO1, MT-CO2 and MT-CO3, encoded in the mitochondrial DNA, and 11 supernumerary subunits COX4I, COX5A, COX5B, COX6A, COX6B, COX6C, COX7A, COX7B, COX7C, COX8 and NDUFA4, which are encoded in the nuclear genome. The complex exists as a monomer or a dimer and forms supercomplexes (SCs) in the inner mitochondrial membrane with NADH-ubiquinone oxidoreductase (complex I, CI) and ubiquinol-cytochrome c oxidoreductase (cytochrome b-c1 complex, complex III, CIII), resulting in different assemblies (supercomplex SCI(1)III(2)IV(1) and megacomplex MCI(2)III(2)IV(2)).</text>
</comment>
<comment type="subcellular location">
    <subcellularLocation>
        <location evidence="1">Mitochondrion inner membrane</location>
        <topology evidence="1">Multi-pass membrane protein</topology>
    </subcellularLocation>
</comment>
<comment type="similarity">
    <text evidence="3">Belongs to the cytochrome c oxidase subunit 3 family.</text>
</comment>
<keyword id="KW-0472">Membrane</keyword>
<keyword id="KW-0496">Mitochondrion</keyword>
<keyword id="KW-0999">Mitochondrion inner membrane</keyword>
<keyword id="KW-1278">Translocase</keyword>
<keyword id="KW-0812">Transmembrane</keyword>
<keyword id="KW-1133">Transmembrane helix</keyword>
<protein>
    <recommendedName>
        <fullName>Cytochrome c oxidase subunit 3</fullName>
        <ecNumber>7.1.1.9</ecNumber>
    </recommendedName>
    <alternativeName>
        <fullName>Cytochrome c oxidase polypeptide III</fullName>
    </alternativeName>
</protein>